<keyword id="KW-0143">Chaperone</keyword>
<keyword id="KW-0963">Cytoplasm</keyword>
<keyword id="KW-0235">DNA replication</keyword>
<keyword id="KW-0479">Metal-binding</keyword>
<keyword id="KW-1185">Reference proteome</keyword>
<keyword id="KW-0677">Repeat</keyword>
<keyword id="KW-0346">Stress response</keyword>
<keyword id="KW-0862">Zinc</keyword>
<keyword id="KW-0863">Zinc-finger</keyword>
<organism>
    <name type="scientific">Roseiflexus castenholzii (strain DSM 13941 / HLO8)</name>
    <dbReference type="NCBI Taxonomy" id="383372"/>
    <lineage>
        <taxon>Bacteria</taxon>
        <taxon>Bacillati</taxon>
        <taxon>Chloroflexota</taxon>
        <taxon>Chloroflexia</taxon>
        <taxon>Chloroflexales</taxon>
        <taxon>Roseiflexineae</taxon>
        <taxon>Roseiflexaceae</taxon>
        <taxon>Roseiflexus</taxon>
    </lineage>
</organism>
<comment type="function">
    <text evidence="1">Participates actively in the response to hyperosmotic and heat shock by preventing the aggregation of stress-denatured proteins and by disaggregating proteins, also in an autonomous, DnaK-independent fashion. Unfolded proteins bind initially to DnaJ; upon interaction with the DnaJ-bound protein, DnaK hydrolyzes its bound ATP, resulting in the formation of a stable complex. GrpE releases ADP from DnaK; ATP binding to DnaK triggers the release of the substrate protein, thus completing the reaction cycle. Several rounds of ATP-dependent interactions between DnaJ, DnaK and GrpE are required for fully efficient folding. Also involved, together with DnaK and GrpE, in the DNA replication of plasmids through activation of initiation proteins.</text>
</comment>
<comment type="cofactor">
    <cofactor evidence="1">
        <name>Zn(2+)</name>
        <dbReference type="ChEBI" id="CHEBI:29105"/>
    </cofactor>
    <text evidence="1">Binds 2 Zn(2+) ions per monomer.</text>
</comment>
<comment type="subunit">
    <text evidence="1">Homodimer.</text>
</comment>
<comment type="subcellular location">
    <subcellularLocation>
        <location evidence="1">Cytoplasm</location>
    </subcellularLocation>
</comment>
<comment type="domain">
    <text evidence="1">The J domain is necessary and sufficient to stimulate DnaK ATPase activity. Zinc center 1 plays an important role in the autonomous, DnaK-independent chaperone activity of DnaJ. Zinc center 2 is essential for interaction with DnaK and for DnaJ activity.</text>
</comment>
<comment type="similarity">
    <text evidence="1">Belongs to the DnaJ family.</text>
</comment>
<feature type="chain" id="PRO_1000085277" description="Chaperone protein DnaJ">
    <location>
        <begin position="1"/>
        <end position="370"/>
    </location>
</feature>
<feature type="domain" description="J" evidence="1">
    <location>
        <begin position="6"/>
        <end position="70"/>
    </location>
</feature>
<feature type="repeat" description="CXXCXGXG motif">
    <location>
        <begin position="141"/>
        <end position="148"/>
    </location>
</feature>
<feature type="repeat" description="CXXCXGXG motif">
    <location>
        <begin position="158"/>
        <end position="165"/>
    </location>
</feature>
<feature type="repeat" description="CXXCXGXG motif">
    <location>
        <begin position="182"/>
        <end position="189"/>
    </location>
</feature>
<feature type="repeat" description="CXXCXGXG motif">
    <location>
        <begin position="196"/>
        <end position="203"/>
    </location>
</feature>
<feature type="zinc finger region" description="CR-type" evidence="1">
    <location>
        <begin position="128"/>
        <end position="208"/>
    </location>
</feature>
<feature type="binding site" evidence="1">
    <location>
        <position position="141"/>
    </location>
    <ligand>
        <name>Zn(2+)</name>
        <dbReference type="ChEBI" id="CHEBI:29105"/>
        <label>1</label>
    </ligand>
</feature>
<feature type="binding site" evidence="1">
    <location>
        <position position="144"/>
    </location>
    <ligand>
        <name>Zn(2+)</name>
        <dbReference type="ChEBI" id="CHEBI:29105"/>
        <label>1</label>
    </ligand>
</feature>
<feature type="binding site" evidence="1">
    <location>
        <position position="158"/>
    </location>
    <ligand>
        <name>Zn(2+)</name>
        <dbReference type="ChEBI" id="CHEBI:29105"/>
        <label>2</label>
    </ligand>
</feature>
<feature type="binding site" evidence="1">
    <location>
        <position position="161"/>
    </location>
    <ligand>
        <name>Zn(2+)</name>
        <dbReference type="ChEBI" id="CHEBI:29105"/>
        <label>2</label>
    </ligand>
</feature>
<feature type="binding site" evidence="1">
    <location>
        <position position="182"/>
    </location>
    <ligand>
        <name>Zn(2+)</name>
        <dbReference type="ChEBI" id="CHEBI:29105"/>
        <label>2</label>
    </ligand>
</feature>
<feature type="binding site" evidence="1">
    <location>
        <position position="185"/>
    </location>
    <ligand>
        <name>Zn(2+)</name>
        <dbReference type="ChEBI" id="CHEBI:29105"/>
        <label>2</label>
    </ligand>
</feature>
<feature type="binding site" evidence="1">
    <location>
        <position position="196"/>
    </location>
    <ligand>
        <name>Zn(2+)</name>
        <dbReference type="ChEBI" id="CHEBI:29105"/>
        <label>1</label>
    </ligand>
</feature>
<feature type="binding site" evidence="1">
    <location>
        <position position="199"/>
    </location>
    <ligand>
        <name>Zn(2+)</name>
        <dbReference type="ChEBI" id="CHEBI:29105"/>
        <label>1</label>
    </ligand>
</feature>
<gene>
    <name evidence="1" type="primary">dnaJ</name>
    <name type="ordered locus">Rcas_4393</name>
</gene>
<dbReference type="EMBL" id="CP000804">
    <property type="protein sequence ID" value="ABU60411.1"/>
    <property type="molecule type" value="Genomic_DNA"/>
</dbReference>
<dbReference type="RefSeq" id="WP_012122832.1">
    <property type="nucleotide sequence ID" value="NC_009767.1"/>
</dbReference>
<dbReference type="SMR" id="A7NS65"/>
<dbReference type="STRING" id="383372.Rcas_4393"/>
<dbReference type="KEGG" id="rca:Rcas_4393"/>
<dbReference type="eggNOG" id="COG0484">
    <property type="taxonomic scope" value="Bacteria"/>
</dbReference>
<dbReference type="HOGENOM" id="CLU_017633_0_7_0"/>
<dbReference type="OrthoDB" id="9779889at2"/>
<dbReference type="Proteomes" id="UP000000263">
    <property type="component" value="Chromosome"/>
</dbReference>
<dbReference type="GO" id="GO:0005737">
    <property type="term" value="C:cytoplasm"/>
    <property type="evidence" value="ECO:0007669"/>
    <property type="project" value="UniProtKB-SubCell"/>
</dbReference>
<dbReference type="GO" id="GO:0005524">
    <property type="term" value="F:ATP binding"/>
    <property type="evidence" value="ECO:0007669"/>
    <property type="project" value="InterPro"/>
</dbReference>
<dbReference type="GO" id="GO:0031072">
    <property type="term" value="F:heat shock protein binding"/>
    <property type="evidence" value="ECO:0007669"/>
    <property type="project" value="InterPro"/>
</dbReference>
<dbReference type="GO" id="GO:0051082">
    <property type="term" value="F:unfolded protein binding"/>
    <property type="evidence" value="ECO:0007669"/>
    <property type="project" value="UniProtKB-UniRule"/>
</dbReference>
<dbReference type="GO" id="GO:0008270">
    <property type="term" value="F:zinc ion binding"/>
    <property type="evidence" value="ECO:0007669"/>
    <property type="project" value="UniProtKB-UniRule"/>
</dbReference>
<dbReference type="GO" id="GO:0051085">
    <property type="term" value="P:chaperone cofactor-dependent protein refolding"/>
    <property type="evidence" value="ECO:0007669"/>
    <property type="project" value="TreeGrafter"/>
</dbReference>
<dbReference type="GO" id="GO:0006260">
    <property type="term" value="P:DNA replication"/>
    <property type="evidence" value="ECO:0007669"/>
    <property type="project" value="UniProtKB-KW"/>
</dbReference>
<dbReference type="GO" id="GO:0042026">
    <property type="term" value="P:protein refolding"/>
    <property type="evidence" value="ECO:0007669"/>
    <property type="project" value="TreeGrafter"/>
</dbReference>
<dbReference type="GO" id="GO:0009408">
    <property type="term" value="P:response to heat"/>
    <property type="evidence" value="ECO:0007669"/>
    <property type="project" value="InterPro"/>
</dbReference>
<dbReference type="CDD" id="cd06257">
    <property type="entry name" value="DnaJ"/>
    <property type="match status" value="1"/>
</dbReference>
<dbReference type="CDD" id="cd10747">
    <property type="entry name" value="DnaJ_C"/>
    <property type="match status" value="1"/>
</dbReference>
<dbReference type="CDD" id="cd10719">
    <property type="entry name" value="DnaJ_zf"/>
    <property type="match status" value="1"/>
</dbReference>
<dbReference type="FunFam" id="2.60.260.20:FF:000005">
    <property type="entry name" value="Chaperone protein dnaJ 1, mitochondrial"/>
    <property type="match status" value="1"/>
</dbReference>
<dbReference type="FunFam" id="1.10.287.110:FF:000031">
    <property type="entry name" value="Molecular chaperone DnaJ"/>
    <property type="match status" value="1"/>
</dbReference>
<dbReference type="FunFam" id="2.10.230.10:FF:000002">
    <property type="entry name" value="Molecular chaperone DnaJ"/>
    <property type="match status" value="1"/>
</dbReference>
<dbReference type="Gene3D" id="1.10.287.110">
    <property type="entry name" value="DnaJ domain"/>
    <property type="match status" value="1"/>
</dbReference>
<dbReference type="Gene3D" id="2.10.230.10">
    <property type="entry name" value="Heat shock protein DnaJ, cysteine-rich domain"/>
    <property type="match status" value="1"/>
</dbReference>
<dbReference type="Gene3D" id="2.60.260.20">
    <property type="entry name" value="Urease metallochaperone UreE, N-terminal domain"/>
    <property type="match status" value="2"/>
</dbReference>
<dbReference type="HAMAP" id="MF_01152">
    <property type="entry name" value="DnaJ"/>
    <property type="match status" value="1"/>
</dbReference>
<dbReference type="InterPro" id="IPR012724">
    <property type="entry name" value="DnaJ"/>
</dbReference>
<dbReference type="InterPro" id="IPR002939">
    <property type="entry name" value="DnaJ_C"/>
</dbReference>
<dbReference type="InterPro" id="IPR001623">
    <property type="entry name" value="DnaJ_domain"/>
</dbReference>
<dbReference type="InterPro" id="IPR018253">
    <property type="entry name" value="DnaJ_domain_CS"/>
</dbReference>
<dbReference type="InterPro" id="IPR008971">
    <property type="entry name" value="HSP40/DnaJ_pept-bd"/>
</dbReference>
<dbReference type="InterPro" id="IPR001305">
    <property type="entry name" value="HSP_DnaJ_Cys-rich_dom"/>
</dbReference>
<dbReference type="InterPro" id="IPR036410">
    <property type="entry name" value="HSP_DnaJ_Cys-rich_dom_sf"/>
</dbReference>
<dbReference type="InterPro" id="IPR036869">
    <property type="entry name" value="J_dom_sf"/>
</dbReference>
<dbReference type="NCBIfam" id="TIGR02349">
    <property type="entry name" value="DnaJ_bact"/>
    <property type="match status" value="1"/>
</dbReference>
<dbReference type="NCBIfam" id="NF008035">
    <property type="entry name" value="PRK10767.1"/>
    <property type="match status" value="1"/>
</dbReference>
<dbReference type="PANTHER" id="PTHR43096:SF48">
    <property type="entry name" value="CHAPERONE PROTEIN DNAJ"/>
    <property type="match status" value="1"/>
</dbReference>
<dbReference type="PANTHER" id="PTHR43096">
    <property type="entry name" value="DNAJ HOMOLOG 1, MITOCHONDRIAL-RELATED"/>
    <property type="match status" value="1"/>
</dbReference>
<dbReference type="Pfam" id="PF00226">
    <property type="entry name" value="DnaJ"/>
    <property type="match status" value="1"/>
</dbReference>
<dbReference type="Pfam" id="PF01556">
    <property type="entry name" value="DnaJ_C"/>
    <property type="match status" value="1"/>
</dbReference>
<dbReference type="Pfam" id="PF00684">
    <property type="entry name" value="DnaJ_CXXCXGXG"/>
    <property type="match status" value="1"/>
</dbReference>
<dbReference type="PRINTS" id="PR00625">
    <property type="entry name" value="JDOMAIN"/>
</dbReference>
<dbReference type="SMART" id="SM00271">
    <property type="entry name" value="DnaJ"/>
    <property type="match status" value="1"/>
</dbReference>
<dbReference type="SUPFAM" id="SSF46565">
    <property type="entry name" value="Chaperone J-domain"/>
    <property type="match status" value="1"/>
</dbReference>
<dbReference type="SUPFAM" id="SSF57938">
    <property type="entry name" value="DnaJ/Hsp40 cysteine-rich domain"/>
    <property type="match status" value="1"/>
</dbReference>
<dbReference type="SUPFAM" id="SSF49493">
    <property type="entry name" value="HSP40/DnaJ peptide-binding domain"/>
    <property type="match status" value="2"/>
</dbReference>
<dbReference type="PROSITE" id="PS00636">
    <property type="entry name" value="DNAJ_1"/>
    <property type="match status" value="1"/>
</dbReference>
<dbReference type="PROSITE" id="PS50076">
    <property type="entry name" value="DNAJ_2"/>
    <property type="match status" value="1"/>
</dbReference>
<dbReference type="PROSITE" id="PS51188">
    <property type="entry name" value="ZF_CR"/>
    <property type="match status" value="1"/>
</dbReference>
<evidence type="ECO:0000255" key="1">
    <source>
        <dbReference type="HAMAP-Rule" id="MF_01152"/>
    </source>
</evidence>
<protein>
    <recommendedName>
        <fullName evidence="1">Chaperone protein DnaJ</fullName>
    </recommendedName>
</protein>
<sequence>MAVKRDYYEVLGVQRNASQDEIKKAFRRLARQYHPDVNKAPDAEAKFKEINEAYEVLSDPEKRSMYDRFGHAGPTAAPGFDPFASADPFSSIFETFFGGTMRGTQRGPQRGADLRYTLSISFEEAIFGVEKTIEYRRMETCPACRGSGAEPGTEPVRCPKCGGLGEIRQRAPLFNMVTVTTCDMCRGEGTVIAIPCRECRGEGRIRQTRKITVRVPPGVDSSAQIRISGEGDAGPRGGPYGNLYVVIDVQPHPFFIREGNDIILELPLNVAQAALGTEVDVPTIEGTERLHIPPGVQNGAVFRIRGKGAPFLRSSGRGDQIVVVRVVVPTNLNDHQRRLFEELARSLENEPIGNQRDEGFFGRIKNALGL</sequence>
<accession>A7NS65</accession>
<proteinExistence type="inferred from homology"/>
<name>DNAJ_ROSCS</name>
<reference key="1">
    <citation type="submission" date="2007-08" db="EMBL/GenBank/DDBJ databases">
        <title>Complete sequence of Roseiflexus castenholzii DSM 13941.</title>
        <authorList>
            <consortium name="US DOE Joint Genome Institute"/>
            <person name="Copeland A."/>
            <person name="Lucas S."/>
            <person name="Lapidus A."/>
            <person name="Barry K."/>
            <person name="Glavina del Rio T."/>
            <person name="Dalin E."/>
            <person name="Tice H."/>
            <person name="Pitluck S."/>
            <person name="Thompson L.S."/>
            <person name="Brettin T."/>
            <person name="Bruce D."/>
            <person name="Detter J.C."/>
            <person name="Han C."/>
            <person name="Tapia R."/>
            <person name="Schmutz J."/>
            <person name="Larimer F."/>
            <person name="Land M."/>
            <person name="Hauser L."/>
            <person name="Kyrpides N."/>
            <person name="Mikhailova N."/>
            <person name="Bryant D.A."/>
            <person name="Hanada S."/>
            <person name="Tsukatani Y."/>
            <person name="Richardson P."/>
        </authorList>
    </citation>
    <scope>NUCLEOTIDE SEQUENCE [LARGE SCALE GENOMIC DNA]</scope>
    <source>
        <strain>DSM 13941 / HLO8</strain>
    </source>
</reference>